<evidence type="ECO:0000255" key="1"/>
<evidence type="ECO:0000305" key="2"/>
<reference key="1">
    <citation type="journal article" date="2001" name="Virology">
        <title>Analysis of the first complete DNA sequence of an invertebrate iridovirus: coding strategy of the genome of Chilo iridescent virus.</title>
        <authorList>
            <person name="Jakob N.J."/>
            <person name="Mueller K."/>
            <person name="Bahr U."/>
            <person name="Darai G."/>
        </authorList>
    </citation>
    <scope>NUCLEOTIDE SEQUENCE [LARGE SCALE GENOMIC DNA]</scope>
</reference>
<reference key="2">
    <citation type="journal article" date="2007" name="Virol. J.">
        <title>Comparative genomic analysis of the family Iridoviridae: re-annotating and defining the core set of iridovirus genes.</title>
        <authorList>
            <person name="Eaton H.E."/>
            <person name="Metcalf J."/>
            <person name="Penny E."/>
            <person name="Tcherepanov V."/>
            <person name="Upton C."/>
            <person name="Brunetti C.R."/>
        </authorList>
    </citation>
    <scope>GENOME REANNOTATION</scope>
</reference>
<feature type="chain" id="PRO_0000377982" description="Uncharacterized protein 083L">
    <location>
        <begin position="1"/>
        <end position="50"/>
    </location>
</feature>
<feature type="transmembrane region" description="Helical" evidence="1">
    <location>
        <begin position="5"/>
        <end position="19"/>
    </location>
</feature>
<feature type="coiled-coil region" evidence="1">
    <location>
        <begin position="19"/>
        <end position="50"/>
    </location>
</feature>
<organismHost>
    <name type="scientific">Acheta domesticus</name>
    <name type="common">House cricket</name>
    <dbReference type="NCBI Taxonomy" id="6997"/>
</organismHost>
<organismHost>
    <name type="scientific">Chilo suppressalis</name>
    <name type="common">Asiatic rice borer moth</name>
    <dbReference type="NCBI Taxonomy" id="168631"/>
</organismHost>
<organismHost>
    <name type="scientific">Gryllus bimaculatus</name>
    <name type="common">Two-spotted cricket</name>
    <dbReference type="NCBI Taxonomy" id="6999"/>
</organismHost>
<organismHost>
    <name type="scientific">Gryllus campestris</name>
    <dbReference type="NCBI Taxonomy" id="58607"/>
</organismHost>
<organismHost>
    <name type="scientific">Spodoptera frugiperda</name>
    <name type="common">Fall armyworm</name>
    <dbReference type="NCBI Taxonomy" id="7108"/>
</organismHost>
<comment type="subcellular location">
    <subcellularLocation>
        <location evidence="2">Membrane</location>
        <topology evidence="2">Single-pass membrane protein</topology>
    </subcellularLocation>
</comment>
<organism>
    <name type="scientific">Invertebrate iridescent virus 6</name>
    <name type="common">IIV-6</name>
    <name type="synonym">Chilo iridescent virus</name>
    <dbReference type="NCBI Taxonomy" id="176652"/>
    <lineage>
        <taxon>Viruses</taxon>
        <taxon>Varidnaviria</taxon>
        <taxon>Bamfordvirae</taxon>
        <taxon>Nucleocytoviricota</taxon>
        <taxon>Megaviricetes</taxon>
        <taxon>Pimascovirales</taxon>
        <taxon>Iridoviridae</taxon>
        <taxon>Betairidovirinae</taxon>
        <taxon>Iridovirus</taxon>
    </lineage>
</organism>
<proteinExistence type="predicted"/>
<protein>
    <recommendedName>
        <fullName>Uncharacterized protein 083L</fullName>
    </recommendedName>
</protein>
<accession>O55714</accession>
<sequence>MDNEIIIIVIVIIIFFFYLKQKKLTNCETQVVKVQKDIDEINLKLKKLNK</sequence>
<gene>
    <name type="ORF">IIV6-083L</name>
</gene>
<name>083L_IIV6</name>
<dbReference type="EMBL" id="AF303741">
    <property type="protein sequence ID" value="AAB94425.1"/>
    <property type="molecule type" value="Genomic_DNA"/>
</dbReference>
<dbReference type="PIR" id="T03051">
    <property type="entry name" value="T03051"/>
</dbReference>
<dbReference type="RefSeq" id="NP_149546.1">
    <property type="nucleotide sequence ID" value="NC_003038.1"/>
</dbReference>
<dbReference type="SMR" id="O55714"/>
<dbReference type="KEGG" id="vg:1733221"/>
<dbReference type="Proteomes" id="UP000001359">
    <property type="component" value="Genome"/>
</dbReference>
<dbReference type="GO" id="GO:0016020">
    <property type="term" value="C:membrane"/>
    <property type="evidence" value="ECO:0007669"/>
    <property type="project" value="UniProtKB-SubCell"/>
</dbReference>
<keyword id="KW-0175">Coiled coil</keyword>
<keyword id="KW-0472">Membrane</keyword>
<keyword id="KW-1185">Reference proteome</keyword>
<keyword id="KW-0812">Transmembrane</keyword>
<keyword id="KW-1133">Transmembrane helix</keyword>